<gene>
    <name evidence="1" type="primary">rpsZ</name>
    <name evidence="1" type="synonym">rpsN</name>
    <name type="ordered locus">str1921</name>
</gene>
<evidence type="ECO:0000255" key="1">
    <source>
        <dbReference type="HAMAP-Rule" id="MF_01364"/>
    </source>
</evidence>
<evidence type="ECO:0000305" key="2"/>
<keyword id="KW-0479">Metal-binding</keyword>
<keyword id="KW-0687">Ribonucleoprotein</keyword>
<keyword id="KW-0689">Ribosomal protein</keyword>
<keyword id="KW-0694">RNA-binding</keyword>
<keyword id="KW-0699">rRNA-binding</keyword>
<keyword id="KW-0862">Zinc</keyword>
<accession>Q5LXS4</accession>
<proteinExistence type="inferred from homology"/>
<sequence length="61" mass="7069">MAKKSLIAKNKRPAKFSTQAYTRCERCGRPHSVYRKFKLCRVCFRELAHKGQIPGVTKASW</sequence>
<organism>
    <name type="scientific">Streptococcus thermophilus (strain CNRZ 1066)</name>
    <dbReference type="NCBI Taxonomy" id="299768"/>
    <lineage>
        <taxon>Bacteria</taxon>
        <taxon>Bacillati</taxon>
        <taxon>Bacillota</taxon>
        <taxon>Bacilli</taxon>
        <taxon>Lactobacillales</taxon>
        <taxon>Streptococcaceae</taxon>
        <taxon>Streptococcus</taxon>
    </lineage>
</organism>
<name>RS14Z_STRT1</name>
<comment type="function">
    <text evidence="1">Binds 16S rRNA, required for the assembly of 30S particles and may also be responsible for determining the conformation of the 16S rRNA at the A site.</text>
</comment>
<comment type="cofactor">
    <cofactor evidence="1">
        <name>Zn(2+)</name>
        <dbReference type="ChEBI" id="CHEBI:29105"/>
    </cofactor>
    <text evidence="1">Binds 1 zinc ion per subunit.</text>
</comment>
<comment type="subunit">
    <text evidence="1">Part of the 30S ribosomal subunit. Contacts proteins S3 and S10.</text>
</comment>
<comment type="similarity">
    <text evidence="1">Belongs to the universal ribosomal protein uS14 family. Zinc-binding uS14 subfamily.</text>
</comment>
<reference key="1">
    <citation type="journal article" date="2004" name="Nat. Biotechnol.">
        <title>Complete sequence and comparative genome analysis of the dairy bacterium Streptococcus thermophilus.</title>
        <authorList>
            <person name="Bolotin A."/>
            <person name="Quinquis B."/>
            <person name="Renault P."/>
            <person name="Sorokin A."/>
            <person name="Ehrlich S.D."/>
            <person name="Kulakauskas S."/>
            <person name="Lapidus A."/>
            <person name="Goltsman E."/>
            <person name="Mazur M."/>
            <person name="Pusch G.D."/>
            <person name="Fonstein M."/>
            <person name="Overbeek R."/>
            <person name="Kyprides N."/>
            <person name="Purnelle B."/>
            <person name="Prozzi D."/>
            <person name="Ngui K."/>
            <person name="Masuy D."/>
            <person name="Hancy F."/>
            <person name="Burteau S."/>
            <person name="Boutry M."/>
            <person name="Delcour J."/>
            <person name="Goffeau A."/>
            <person name="Hols P."/>
        </authorList>
    </citation>
    <scope>NUCLEOTIDE SEQUENCE [LARGE SCALE GENOMIC DNA]</scope>
    <source>
        <strain>CNRZ 1066</strain>
    </source>
</reference>
<protein>
    <recommendedName>
        <fullName evidence="1">Small ribosomal subunit protein uS14</fullName>
    </recommendedName>
    <alternativeName>
        <fullName evidence="2">30S ribosomal protein S14 type Z</fullName>
    </alternativeName>
</protein>
<dbReference type="EMBL" id="CP000024">
    <property type="protein sequence ID" value="AAV63434.1"/>
    <property type="molecule type" value="Genomic_DNA"/>
</dbReference>
<dbReference type="RefSeq" id="WP_002946164.1">
    <property type="nucleotide sequence ID" value="NC_006449.1"/>
</dbReference>
<dbReference type="SMR" id="Q5LXS4"/>
<dbReference type="KEGG" id="stc:str1921"/>
<dbReference type="HOGENOM" id="CLU_139869_3_0_9"/>
<dbReference type="GO" id="GO:0015935">
    <property type="term" value="C:small ribosomal subunit"/>
    <property type="evidence" value="ECO:0007669"/>
    <property type="project" value="TreeGrafter"/>
</dbReference>
<dbReference type="GO" id="GO:0019843">
    <property type="term" value="F:rRNA binding"/>
    <property type="evidence" value="ECO:0007669"/>
    <property type="project" value="UniProtKB-UniRule"/>
</dbReference>
<dbReference type="GO" id="GO:0003735">
    <property type="term" value="F:structural constituent of ribosome"/>
    <property type="evidence" value="ECO:0007669"/>
    <property type="project" value="InterPro"/>
</dbReference>
<dbReference type="GO" id="GO:0008270">
    <property type="term" value="F:zinc ion binding"/>
    <property type="evidence" value="ECO:0007669"/>
    <property type="project" value="UniProtKB-UniRule"/>
</dbReference>
<dbReference type="GO" id="GO:0006412">
    <property type="term" value="P:translation"/>
    <property type="evidence" value="ECO:0007669"/>
    <property type="project" value="UniProtKB-UniRule"/>
</dbReference>
<dbReference type="FunFam" id="4.10.830.10:FF:000001">
    <property type="entry name" value="30S ribosomal protein S14 type Z"/>
    <property type="match status" value="1"/>
</dbReference>
<dbReference type="Gene3D" id="4.10.830.10">
    <property type="entry name" value="30s Ribosomal Protein S14, Chain N"/>
    <property type="match status" value="1"/>
</dbReference>
<dbReference type="HAMAP" id="MF_01364_B">
    <property type="entry name" value="Ribosomal_uS14_2_B"/>
    <property type="match status" value="1"/>
</dbReference>
<dbReference type="InterPro" id="IPR001209">
    <property type="entry name" value="Ribosomal_uS14"/>
</dbReference>
<dbReference type="InterPro" id="IPR023053">
    <property type="entry name" value="Ribosomal_uS14_bact"/>
</dbReference>
<dbReference type="InterPro" id="IPR018271">
    <property type="entry name" value="Ribosomal_uS14_CS"/>
</dbReference>
<dbReference type="InterPro" id="IPR043140">
    <property type="entry name" value="Ribosomal_uS14_sf"/>
</dbReference>
<dbReference type="NCBIfam" id="NF005974">
    <property type="entry name" value="PRK08061.1"/>
    <property type="match status" value="1"/>
</dbReference>
<dbReference type="PANTHER" id="PTHR19836">
    <property type="entry name" value="30S RIBOSOMAL PROTEIN S14"/>
    <property type="match status" value="1"/>
</dbReference>
<dbReference type="PANTHER" id="PTHR19836:SF26">
    <property type="entry name" value="SMALL RIBOSOMAL SUBUNIT PROTEIN US14B"/>
    <property type="match status" value="1"/>
</dbReference>
<dbReference type="Pfam" id="PF00253">
    <property type="entry name" value="Ribosomal_S14"/>
    <property type="match status" value="1"/>
</dbReference>
<dbReference type="SUPFAM" id="SSF57716">
    <property type="entry name" value="Glucocorticoid receptor-like (DNA-binding domain)"/>
    <property type="match status" value="1"/>
</dbReference>
<dbReference type="PROSITE" id="PS00527">
    <property type="entry name" value="RIBOSOMAL_S14"/>
    <property type="match status" value="1"/>
</dbReference>
<feature type="chain" id="PRO_0000269150" description="Small ribosomal subunit protein uS14">
    <location>
        <begin position="1"/>
        <end position="61"/>
    </location>
</feature>
<feature type="binding site" evidence="1">
    <location>
        <position position="24"/>
    </location>
    <ligand>
        <name>Zn(2+)</name>
        <dbReference type="ChEBI" id="CHEBI:29105"/>
    </ligand>
</feature>
<feature type="binding site" evidence="1">
    <location>
        <position position="27"/>
    </location>
    <ligand>
        <name>Zn(2+)</name>
        <dbReference type="ChEBI" id="CHEBI:29105"/>
    </ligand>
</feature>
<feature type="binding site" evidence="1">
    <location>
        <position position="40"/>
    </location>
    <ligand>
        <name>Zn(2+)</name>
        <dbReference type="ChEBI" id="CHEBI:29105"/>
    </ligand>
</feature>
<feature type="binding site" evidence="1">
    <location>
        <position position="43"/>
    </location>
    <ligand>
        <name>Zn(2+)</name>
        <dbReference type="ChEBI" id="CHEBI:29105"/>
    </ligand>
</feature>